<evidence type="ECO:0000250" key="1">
    <source>
        <dbReference type="UniProtKB" id="P00568"/>
    </source>
</evidence>
<evidence type="ECO:0000250" key="2">
    <source>
        <dbReference type="UniProtKB" id="P05081"/>
    </source>
</evidence>
<evidence type="ECO:0000255" key="3">
    <source>
        <dbReference type="HAMAP-Rule" id="MF_03171"/>
    </source>
</evidence>
<evidence type="ECO:0000305" key="4"/>
<name>KAD1_BOVIN</name>
<accession>P00570</accession>
<accession>Q5E9G9</accession>
<feature type="chain" id="PRO_0000158909" description="Adenylate kinase isoenzyme 1">
    <location>
        <begin position="1"/>
        <end position="194"/>
    </location>
</feature>
<feature type="region of interest" description="NMP" evidence="3">
    <location>
        <begin position="38"/>
        <end position="67"/>
    </location>
</feature>
<feature type="region of interest" description="LID" evidence="3">
    <location>
        <begin position="131"/>
        <end position="141"/>
    </location>
</feature>
<feature type="binding site" evidence="3">
    <location>
        <begin position="18"/>
        <end position="23"/>
    </location>
    <ligand>
        <name>ATP</name>
        <dbReference type="ChEBI" id="CHEBI:30616"/>
    </ligand>
</feature>
<feature type="binding site" evidence="3">
    <location>
        <position position="39"/>
    </location>
    <ligand>
        <name>AMP</name>
        <dbReference type="ChEBI" id="CHEBI:456215"/>
    </ligand>
</feature>
<feature type="binding site" evidence="3">
    <location>
        <position position="44"/>
    </location>
    <ligand>
        <name>AMP</name>
        <dbReference type="ChEBI" id="CHEBI:456215"/>
    </ligand>
</feature>
<feature type="binding site" evidence="3">
    <location>
        <begin position="65"/>
        <end position="67"/>
    </location>
    <ligand>
        <name>AMP</name>
        <dbReference type="ChEBI" id="CHEBI:456215"/>
    </ligand>
</feature>
<feature type="binding site" evidence="3">
    <location>
        <begin position="94"/>
        <end position="97"/>
    </location>
    <ligand>
        <name>AMP</name>
        <dbReference type="ChEBI" id="CHEBI:456215"/>
    </ligand>
</feature>
<feature type="binding site" evidence="3">
    <location>
        <position position="101"/>
    </location>
    <ligand>
        <name>AMP</name>
        <dbReference type="ChEBI" id="CHEBI:456215"/>
    </ligand>
</feature>
<feature type="binding site" evidence="3">
    <location>
        <position position="132"/>
    </location>
    <ligand>
        <name>ATP</name>
        <dbReference type="ChEBI" id="CHEBI:30616"/>
    </ligand>
</feature>
<feature type="binding site" evidence="3">
    <location>
        <position position="138"/>
    </location>
    <ligand>
        <name>AMP</name>
        <dbReference type="ChEBI" id="CHEBI:456215"/>
    </ligand>
</feature>
<feature type="binding site" evidence="3">
    <location>
        <position position="149"/>
    </location>
    <ligand>
        <name>AMP</name>
        <dbReference type="ChEBI" id="CHEBI:456215"/>
    </ligand>
</feature>
<feature type="binding site" evidence="3">
    <location>
        <position position="177"/>
    </location>
    <ligand>
        <name>ATP</name>
        <dbReference type="ChEBI" id="CHEBI:30616"/>
    </ligand>
</feature>
<feature type="modified residue" description="N-acetylmethionine" evidence="1">
    <location>
        <position position="1"/>
    </location>
</feature>
<feature type="modified residue" description="Phosphoserine" evidence="1">
    <location>
        <position position="38"/>
    </location>
</feature>
<feature type="sequence conflict" description="In Ref. 1; AA sequence." evidence="4" ref="1">
    <original>T</original>
    <variation>A</variation>
    <location>
        <position position="8"/>
    </location>
</feature>
<feature type="sequence conflict" description="In Ref. 1; AA sequence." evidence="4" ref="1">
    <original>D</original>
    <variation>N</variation>
    <location>
        <position position="85"/>
    </location>
</feature>
<feature type="sequence conflict" description="In Ref. 1; AA sequence." evidence="4" ref="1">
    <original>E</original>
    <variation>Q</variation>
    <location>
        <position position="98"/>
    </location>
</feature>
<feature type="sequence conflict" description="In Ref. 1; AA sequence." evidence="4" ref="1">
    <original>T</original>
    <variation>Q</variation>
    <location>
        <position position="126"/>
    </location>
</feature>
<keyword id="KW-0007">Acetylation</keyword>
<keyword id="KW-0067">ATP-binding</keyword>
<keyword id="KW-0963">Cytoplasm</keyword>
<keyword id="KW-0903">Direct protein sequencing</keyword>
<keyword id="KW-0418">Kinase</keyword>
<keyword id="KW-0547">Nucleotide-binding</keyword>
<keyword id="KW-0597">Phosphoprotein</keyword>
<keyword id="KW-1185">Reference proteome</keyword>
<keyword id="KW-0808">Transferase</keyword>
<reference key="1">
    <citation type="journal article" date="1984" name="Biochemistry">
        <title>Studies on adenosine triphosphate transphosphorylases. Amino acid sequence of rabbit muscle ATP-AMP transphosphorylase.</title>
        <authorList>
            <person name="Kuby S.A."/>
            <person name="Palmieri R.H."/>
            <person name="Frischat A."/>
            <person name="Fischer A.H."/>
            <person name="Wu L.H."/>
            <person name="Maland L."/>
            <person name="Manship M."/>
        </authorList>
    </citation>
    <scope>PROTEIN SEQUENCE</scope>
</reference>
<reference key="2">
    <citation type="journal article" date="2005" name="BMC Genomics">
        <title>Characterization of 954 bovine full-CDS cDNA sequences.</title>
        <authorList>
            <person name="Harhay G.P."/>
            <person name="Sonstegard T.S."/>
            <person name="Keele J.W."/>
            <person name="Heaton M.P."/>
            <person name="Clawson M.L."/>
            <person name="Snelling W.M."/>
            <person name="Wiedmann R.T."/>
            <person name="Van Tassell C.P."/>
            <person name="Smith T.P.L."/>
        </authorList>
    </citation>
    <scope>NUCLEOTIDE SEQUENCE [LARGE SCALE MRNA]</scope>
</reference>
<reference key="3">
    <citation type="submission" date="2006-04" db="EMBL/GenBank/DDBJ databases">
        <authorList>
            <consortium name="NIH - Mammalian Gene Collection (MGC) project"/>
        </authorList>
    </citation>
    <scope>NUCLEOTIDE SEQUENCE [LARGE SCALE MRNA]</scope>
    <source>
        <strain>Hereford</strain>
        <tissue>Thymus</tissue>
    </source>
</reference>
<dbReference type="EC" id="2.7.4.3" evidence="1 3"/>
<dbReference type="EC" id="2.7.4.4" evidence="1"/>
<dbReference type="EC" id="2.7.4.6" evidence="1 3"/>
<dbReference type="EMBL" id="BT020951">
    <property type="protein sequence ID" value="AAX08968.1"/>
    <property type="molecule type" value="mRNA"/>
</dbReference>
<dbReference type="EMBL" id="BC114796">
    <property type="protein sequence ID" value="AAI14797.1"/>
    <property type="molecule type" value="mRNA"/>
</dbReference>
<dbReference type="PIR" id="A00681">
    <property type="entry name" value="KIBOA"/>
</dbReference>
<dbReference type="RefSeq" id="NP_001013600.1">
    <property type="nucleotide sequence ID" value="NM_001013582.1"/>
</dbReference>
<dbReference type="RefSeq" id="XP_005213229.1">
    <property type="nucleotide sequence ID" value="XM_005213172.2"/>
</dbReference>
<dbReference type="RefSeq" id="XP_024854025.1">
    <property type="nucleotide sequence ID" value="XM_024998257.1"/>
</dbReference>
<dbReference type="RefSeq" id="XP_059746980.1">
    <property type="nucleotide sequence ID" value="XM_059890997.1"/>
</dbReference>
<dbReference type="BMRB" id="P00570"/>
<dbReference type="SMR" id="P00570"/>
<dbReference type="FunCoup" id="P00570">
    <property type="interactions" value="382"/>
</dbReference>
<dbReference type="STRING" id="9913.ENSBTAP00000063585"/>
<dbReference type="PaxDb" id="9913-ENSBTAP00000050234"/>
<dbReference type="PeptideAtlas" id="P00570"/>
<dbReference type="Ensembl" id="ENSBTAT00000054038.4">
    <property type="protein sequence ID" value="ENSBTAP00000050234.2"/>
    <property type="gene ID" value="ENSBTAG00000006305.6"/>
</dbReference>
<dbReference type="GeneID" id="280715"/>
<dbReference type="KEGG" id="bta:280715"/>
<dbReference type="CTD" id="203"/>
<dbReference type="VEuPathDB" id="HostDB:ENSBTAG00000006305"/>
<dbReference type="VGNC" id="VGNC:25770">
    <property type="gene designation" value="AK1"/>
</dbReference>
<dbReference type="eggNOG" id="KOG3079">
    <property type="taxonomic scope" value="Eukaryota"/>
</dbReference>
<dbReference type="GeneTree" id="ENSGT00940000158325"/>
<dbReference type="HOGENOM" id="CLU_032354_0_3_1"/>
<dbReference type="InParanoid" id="P00570"/>
<dbReference type="OrthoDB" id="442176at2759"/>
<dbReference type="TreeFam" id="TF354283"/>
<dbReference type="BRENDA" id="2.7.4.3">
    <property type="organism ID" value="908"/>
</dbReference>
<dbReference type="Reactome" id="R-BTA-499943">
    <property type="pathway name" value="Interconversion of nucleotide di- and triphosphates"/>
</dbReference>
<dbReference type="Proteomes" id="UP000009136">
    <property type="component" value="Chromosome 11"/>
</dbReference>
<dbReference type="Bgee" id="ENSBTAG00000006305">
    <property type="expression patterns" value="Expressed in longissimus thoracis muscle and 104 other cell types or tissues"/>
</dbReference>
<dbReference type="GO" id="GO:0005737">
    <property type="term" value="C:cytoplasm"/>
    <property type="evidence" value="ECO:0000318"/>
    <property type="project" value="GO_Central"/>
</dbReference>
<dbReference type="GO" id="GO:0005829">
    <property type="term" value="C:cytosol"/>
    <property type="evidence" value="ECO:0000318"/>
    <property type="project" value="GO_Central"/>
</dbReference>
<dbReference type="GO" id="GO:0004017">
    <property type="term" value="F:adenylate kinase activity"/>
    <property type="evidence" value="ECO:0000318"/>
    <property type="project" value="GO_Central"/>
</dbReference>
<dbReference type="GO" id="GO:0005524">
    <property type="term" value="F:ATP binding"/>
    <property type="evidence" value="ECO:0007669"/>
    <property type="project" value="UniProtKB-KW"/>
</dbReference>
<dbReference type="GO" id="GO:0047506">
    <property type="term" value="F:deoxyadenylate kinase activity"/>
    <property type="evidence" value="ECO:0007669"/>
    <property type="project" value="RHEA"/>
</dbReference>
<dbReference type="GO" id="GO:0004550">
    <property type="term" value="F:nucleoside diphosphate kinase activity"/>
    <property type="evidence" value="ECO:0000250"/>
    <property type="project" value="UniProtKB"/>
</dbReference>
<dbReference type="GO" id="GO:0006172">
    <property type="term" value="P:ADP biosynthetic process"/>
    <property type="evidence" value="ECO:0007669"/>
    <property type="project" value="UniProtKB-UniRule"/>
</dbReference>
<dbReference type="GO" id="GO:0046033">
    <property type="term" value="P:AMP metabolic process"/>
    <property type="evidence" value="ECO:0007669"/>
    <property type="project" value="UniProtKB-UniRule"/>
</dbReference>
<dbReference type="GO" id="GO:0046034">
    <property type="term" value="P:ATP metabolic process"/>
    <property type="evidence" value="ECO:0007669"/>
    <property type="project" value="UniProtKB-UniRule"/>
</dbReference>
<dbReference type="GO" id="GO:0009142">
    <property type="term" value="P:nucleoside triphosphate biosynthetic process"/>
    <property type="evidence" value="ECO:0007669"/>
    <property type="project" value="InterPro"/>
</dbReference>
<dbReference type="CDD" id="cd01428">
    <property type="entry name" value="ADK"/>
    <property type="match status" value="1"/>
</dbReference>
<dbReference type="FunFam" id="3.40.50.300:FF:000315">
    <property type="entry name" value="Adenylate kinase 1"/>
    <property type="match status" value="1"/>
</dbReference>
<dbReference type="Gene3D" id="3.40.50.300">
    <property type="entry name" value="P-loop containing nucleotide triphosphate hydrolases"/>
    <property type="match status" value="1"/>
</dbReference>
<dbReference type="HAMAP" id="MF_00235">
    <property type="entry name" value="Adenylate_kinase_Adk"/>
    <property type="match status" value="1"/>
</dbReference>
<dbReference type="HAMAP" id="MF_03171">
    <property type="entry name" value="Adenylate_kinase_AK1"/>
    <property type="match status" value="1"/>
</dbReference>
<dbReference type="InterPro" id="IPR000850">
    <property type="entry name" value="Adenylat/UMP-CMP_kin"/>
</dbReference>
<dbReference type="InterPro" id="IPR033690">
    <property type="entry name" value="Adenylat_kinase_CS"/>
</dbReference>
<dbReference type="InterPro" id="IPR028582">
    <property type="entry name" value="AK1"/>
</dbReference>
<dbReference type="InterPro" id="IPR006267">
    <property type="entry name" value="AK1/5"/>
</dbReference>
<dbReference type="InterPro" id="IPR027417">
    <property type="entry name" value="P-loop_NTPase"/>
</dbReference>
<dbReference type="NCBIfam" id="TIGR01360">
    <property type="entry name" value="aden_kin_iso1"/>
    <property type="match status" value="1"/>
</dbReference>
<dbReference type="NCBIfam" id="NF011100">
    <property type="entry name" value="PRK14527.1"/>
    <property type="match status" value="1"/>
</dbReference>
<dbReference type="PANTHER" id="PTHR23359">
    <property type="entry name" value="NUCLEOTIDE KINASE"/>
    <property type="match status" value="1"/>
</dbReference>
<dbReference type="Pfam" id="PF00406">
    <property type="entry name" value="ADK"/>
    <property type="match status" value="1"/>
</dbReference>
<dbReference type="PRINTS" id="PR00094">
    <property type="entry name" value="ADENYLTKNASE"/>
</dbReference>
<dbReference type="SUPFAM" id="SSF52540">
    <property type="entry name" value="P-loop containing nucleoside triphosphate hydrolases"/>
    <property type="match status" value="1"/>
</dbReference>
<dbReference type="PROSITE" id="PS00113">
    <property type="entry name" value="ADENYLATE_KINASE"/>
    <property type="match status" value="1"/>
</dbReference>
<protein>
    <recommendedName>
        <fullName evidence="3">Adenylate kinase isoenzyme 1</fullName>
        <shortName evidence="3">AK 1</shortName>
        <ecNumber evidence="1 3">2.7.4.3</ecNumber>
        <ecNumber evidence="1">2.7.4.4</ecNumber>
        <ecNumber evidence="1 3">2.7.4.6</ecNumber>
    </recommendedName>
    <alternativeName>
        <fullName evidence="3">ATP-AMP transphosphorylase 1</fullName>
    </alternativeName>
    <alternativeName>
        <fullName evidence="3">ATP:AMP phosphotransferase</fullName>
    </alternativeName>
    <alternativeName>
        <fullName evidence="3">Adenylate monophosphate kinase</fullName>
    </alternativeName>
    <alternativeName>
        <fullName evidence="3">Myokinase</fullName>
    </alternativeName>
</protein>
<gene>
    <name evidence="3" type="primary">AK1</name>
</gene>
<organism>
    <name type="scientific">Bos taurus</name>
    <name type="common">Bovine</name>
    <dbReference type="NCBI Taxonomy" id="9913"/>
    <lineage>
        <taxon>Eukaryota</taxon>
        <taxon>Metazoa</taxon>
        <taxon>Chordata</taxon>
        <taxon>Craniata</taxon>
        <taxon>Vertebrata</taxon>
        <taxon>Euteleostomi</taxon>
        <taxon>Mammalia</taxon>
        <taxon>Eutheria</taxon>
        <taxon>Laurasiatheria</taxon>
        <taxon>Artiodactyla</taxon>
        <taxon>Ruminantia</taxon>
        <taxon>Pecora</taxon>
        <taxon>Bovidae</taxon>
        <taxon>Bovinae</taxon>
        <taxon>Bos</taxon>
    </lineage>
</organism>
<proteinExistence type="evidence at protein level"/>
<comment type="function">
    <text evidence="1 2 3">Catalyzes the reversible transfer of the terminal phosphate group between ATP and AMP. Also displays broad nucleoside diphosphate kinase activity. Plays an important role in cellular energy homeostasis and in adenine nucleotide metabolism (By similarity). Also catalyzes at a very low rate the synthesis of thiamine triphosphate (ThTP) from thiamine diphosphate (ThDP) and ADP (By similarity).</text>
</comment>
<comment type="catalytic activity">
    <reaction evidence="1">
        <text>a ribonucleoside 5'-phosphate + ATP = a ribonucleoside 5'-diphosphate + ADP</text>
        <dbReference type="Rhea" id="RHEA:24036"/>
        <dbReference type="ChEBI" id="CHEBI:30616"/>
        <dbReference type="ChEBI" id="CHEBI:57930"/>
        <dbReference type="ChEBI" id="CHEBI:58043"/>
        <dbReference type="ChEBI" id="CHEBI:456216"/>
        <dbReference type="EC" id="2.7.4.4"/>
    </reaction>
</comment>
<comment type="catalytic activity">
    <reaction evidence="1 3">
        <text>AMP + ATP = 2 ADP</text>
        <dbReference type="Rhea" id="RHEA:12973"/>
        <dbReference type="ChEBI" id="CHEBI:30616"/>
        <dbReference type="ChEBI" id="CHEBI:456215"/>
        <dbReference type="ChEBI" id="CHEBI:456216"/>
        <dbReference type="EC" id="2.7.4.3"/>
    </reaction>
</comment>
<comment type="catalytic activity">
    <reaction evidence="1">
        <text>dAMP + ATP = dADP + ADP</text>
        <dbReference type="Rhea" id="RHEA:23100"/>
        <dbReference type="ChEBI" id="CHEBI:30616"/>
        <dbReference type="ChEBI" id="CHEBI:57667"/>
        <dbReference type="ChEBI" id="CHEBI:58245"/>
        <dbReference type="ChEBI" id="CHEBI:456216"/>
    </reaction>
</comment>
<comment type="catalytic activity">
    <reaction evidence="2">
        <text>dATP + AMP = dADP + ADP</text>
        <dbReference type="Rhea" id="RHEA:79899"/>
        <dbReference type="ChEBI" id="CHEBI:57667"/>
        <dbReference type="ChEBI" id="CHEBI:61404"/>
        <dbReference type="ChEBI" id="CHEBI:456215"/>
        <dbReference type="ChEBI" id="CHEBI:456216"/>
    </reaction>
</comment>
<comment type="catalytic activity">
    <reaction evidence="2">
        <text>dAMP + dATP = 2 dADP</text>
        <dbReference type="Rhea" id="RHEA:78311"/>
        <dbReference type="ChEBI" id="CHEBI:57667"/>
        <dbReference type="ChEBI" id="CHEBI:58245"/>
        <dbReference type="ChEBI" id="CHEBI:61404"/>
    </reaction>
</comment>
<comment type="catalytic activity">
    <reaction evidence="1 3">
        <text>a 2'-deoxyribonucleoside 5'-diphosphate + ATP = a 2'-deoxyribonucleoside 5'-triphosphate + ADP</text>
        <dbReference type="Rhea" id="RHEA:44640"/>
        <dbReference type="ChEBI" id="CHEBI:30616"/>
        <dbReference type="ChEBI" id="CHEBI:61560"/>
        <dbReference type="ChEBI" id="CHEBI:73316"/>
        <dbReference type="ChEBI" id="CHEBI:456216"/>
        <dbReference type="EC" id="2.7.4.6"/>
    </reaction>
</comment>
<comment type="catalytic activity">
    <reaction evidence="1">
        <text>a ribonucleoside 5'-diphosphate + ATP = a ribonucleoside 5'-triphosphate + ADP</text>
        <dbReference type="Rhea" id="RHEA:18113"/>
        <dbReference type="ChEBI" id="CHEBI:30616"/>
        <dbReference type="ChEBI" id="CHEBI:57930"/>
        <dbReference type="ChEBI" id="CHEBI:61557"/>
        <dbReference type="ChEBI" id="CHEBI:456216"/>
        <dbReference type="EC" id="2.7.4.6"/>
    </reaction>
</comment>
<comment type="catalytic activity">
    <reaction evidence="1">
        <text>CDP + GTP = CTP + GDP</text>
        <dbReference type="Rhea" id="RHEA:79859"/>
        <dbReference type="ChEBI" id="CHEBI:37563"/>
        <dbReference type="ChEBI" id="CHEBI:37565"/>
        <dbReference type="ChEBI" id="CHEBI:58069"/>
        <dbReference type="ChEBI" id="CHEBI:58189"/>
    </reaction>
</comment>
<comment type="catalytic activity">
    <reaction evidence="1">
        <text>GDP + ATP = GTP + ADP</text>
        <dbReference type="Rhea" id="RHEA:27686"/>
        <dbReference type="ChEBI" id="CHEBI:30616"/>
        <dbReference type="ChEBI" id="CHEBI:37565"/>
        <dbReference type="ChEBI" id="CHEBI:58189"/>
        <dbReference type="ChEBI" id="CHEBI:456216"/>
        <dbReference type="EC" id="2.7.4.6"/>
    </reaction>
</comment>
<comment type="catalytic activity">
    <reaction evidence="1">
        <text>UDP + ATP = UTP + ADP</text>
        <dbReference type="Rhea" id="RHEA:25098"/>
        <dbReference type="ChEBI" id="CHEBI:30616"/>
        <dbReference type="ChEBI" id="CHEBI:46398"/>
        <dbReference type="ChEBI" id="CHEBI:58223"/>
        <dbReference type="ChEBI" id="CHEBI:456216"/>
        <dbReference type="EC" id="2.7.4.6"/>
    </reaction>
</comment>
<comment type="catalytic activity">
    <reaction evidence="1">
        <text>GTP + UDP = UTP + GDP</text>
        <dbReference type="Rhea" id="RHEA:79863"/>
        <dbReference type="ChEBI" id="CHEBI:37565"/>
        <dbReference type="ChEBI" id="CHEBI:46398"/>
        <dbReference type="ChEBI" id="CHEBI:58189"/>
        <dbReference type="ChEBI" id="CHEBI:58223"/>
    </reaction>
</comment>
<comment type="catalytic activity">
    <reaction evidence="1">
        <text>dTDP + GTP = dTTP + GDP</text>
        <dbReference type="Rhea" id="RHEA:79867"/>
        <dbReference type="ChEBI" id="CHEBI:37565"/>
        <dbReference type="ChEBI" id="CHEBI:37568"/>
        <dbReference type="ChEBI" id="CHEBI:58189"/>
        <dbReference type="ChEBI" id="CHEBI:58369"/>
    </reaction>
</comment>
<comment type="catalytic activity">
    <reaction evidence="1">
        <text>dCDP + GTP = dCTP + GDP</text>
        <dbReference type="Rhea" id="RHEA:79875"/>
        <dbReference type="ChEBI" id="CHEBI:37565"/>
        <dbReference type="ChEBI" id="CHEBI:58189"/>
        <dbReference type="ChEBI" id="CHEBI:58593"/>
        <dbReference type="ChEBI" id="CHEBI:61481"/>
    </reaction>
</comment>
<comment type="catalytic activity">
    <reaction evidence="1">
        <text>dGDP + ATP = dGTP + ADP</text>
        <dbReference type="Rhea" id="RHEA:27690"/>
        <dbReference type="ChEBI" id="CHEBI:30616"/>
        <dbReference type="ChEBI" id="CHEBI:58595"/>
        <dbReference type="ChEBI" id="CHEBI:61429"/>
        <dbReference type="ChEBI" id="CHEBI:456216"/>
        <dbReference type="EC" id="2.7.4.6"/>
    </reaction>
</comment>
<comment type="catalytic activity">
    <reaction evidence="1">
        <text>dADP + GTP = dATP + GDP</text>
        <dbReference type="Rhea" id="RHEA:79871"/>
        <dbReference type="ChEBI" id="CHEBI:37565"/>
        <dbReference type="ChEBI" id="CHEBI:57667"/>
        <dbReference type="ChEBI" id="CHEBI:58189"/>
        <dbReference type="ChEBI" id="CHEBI:61404"/>
    </reaction>
</comment>
<comment type="catalytic activity">
    <reaction evidence="2">
        <text>thiamine diphosphate + ADP = thiamine triphosphate + AMP</text>
        <dbReference type="Rhea" id="RHEA:69180"/>
        <dbReference type="ChEBI" id="CHEBI:58937"/>
        <dbReference type="ChEBI" id="CHEBI:58938"/>
        <dbReference type="ChEBI" id="CHEBI:456215"/>
        <dbReference type="ChEBI" id="CHEBI:456216"/>
    </reaction>
</comment>
<comment type="cofactor">
    <cofactor evidence="2">
        <name>Mg(2+)</name>
        <dbReference type="ChEBI" id="CHEBI:18420"/>
    </cofactor>
</comment>
<comment type="subunit">
    <text evidence="1 3">Monomer.</text>
</comment>
<comment type="subcellular location">
    <subcellularLocation>
        <location evidence="1 3">Cytoplasm</location>
    </subcellularLocation>
</comment>
<comment type="domain">
    <text evidence="1 3">Consists of three domains, a large central CORE domain and two small peripheral domains, NMPbind and LID, which undergo movements during catalysis. The LID domain closes over the site of phosphoryl transfer upon ATP binding. Assembling and dissambling the active center during each catalytic cycle provides an effective means to prevent ATP hydrolysis.</text>
</comment>
<comment type="similarity">
    <text evidence="3">Belongs to the adenylate kinase family. AK1 subfamily.</text>
</comment>
<sequence length="194" mass="21664">MEEKLKKTKIIFVVGGPGSGKGTQCEKIVQKYGYTHLSTGDLLRAEVSSGSARGKMLSEIMEKGQLVPLETVLDMLRDAMVAKVDTSKGFLIDGYPREVQQGEEFERRIAQPTLLLYVDAGPETMTKRLLKRGETSGRVDDNEETIKKRLETYYKATEPVIAFYEKRGIVRKVNAEGSVDNVFSQVCTHLDALK</sequence>